<accession>O34201</accession>
<keyword id="KW-0010">Activator</keyword>
<keyword id="KW-1005">Bacterial flagellum biogenesis</keyword>
<keyword id="KW-0963">Cytoplasm</keyword>
<keyword id="KW-1015">Disulfide bond</keyword>
<keyword id="KW-0238">DNA-binding</keyword>
<keyword id="KW-0804">Transcription</keyword>
<keyword id="KW-0805">Transcription regulation</keyword>
<organism>
    <name type="scientific">Proteus mirabilis</name>
    <dbReference type="NCBI Taxonomy" id="584"/>
    <lineage>
        <taxon>Bacteria</taxon>
        <taxon>Pseudomonadati</taxon>
        <taxon>Pseudomonadota</taxon>
        <taxon>Gammaproteobacteria</taxon>
        <taxon>Enterobacterales</taxon>
        <taxon>Morganellaceae</taxon>
        <taxon>Proteus</taxon>
    </lineage>
</organism>
<proteinExistence type="evidence at protein level"/>
<reference key="1">
    <citation type="journal article" date="1997" name="J. Bacteriol.">
        <title>Negative feedback from a Proteus class II flagellum export defect to the flhDC master operon controlling cell division and flagellum assembly.</title>
        <authorList>
            <person name="Furness R.B."/>
            <person name="Fraser G.M."/>
            <person name="Hay N.A."/>
            <person name="Hughes C."/>
        </authorList>
    </citation>
    <scope>NUCLEOTIDE SEQUENCE [GENOMIC DNA]</scope>
    <source>
        <strain>U6450</strain>
    </source>
</reference>
<reference key="2">
    <citation type="journal article" date="2002" name="J. Mol. Biol.">
        <title>Interaction of the atypical prokaryotic transcription activator FlhD2C2 with early promoters of the flagellar gene hierarchy.</title>
        <authorList>
            <person name="Claret L."/>
            <person name="Hughes C."/>
        </authorList>
    </citation>
    <scope>FUNCTION</scope>
    <scope>INTERACTION WITH FLHC</scope>
    <scope>DNA-BINDING</scope>
    <source>
        <strain>U6450</strain>
    </source>
</reference>
<protein>
    <recommendedName>
        <fullName>Flagellar transcriptional regulator FlhD</fullName>
    </recommendedName>
</protein>
<feature type="chain" id="PRO_0000182721" description="Flagellar transcriptional regulator FlhD">
    <location>
        <begin position="1"/>
        <end position="116"/>
    </location>
</feature>
<feature type="disulfide bond" description="Interchain" evidence="1">
    <location>
        <position position="65"/>
    </location>
</feature>
<comment type="function">
    <text evidence="2">Functions in complex with FlhC as a master transcriptional regulator that regulates transcription of several flagellar and non-flagellar operons by binding to their promoter region. Activates expression of class 2 flagellar genes, including fliA, which is a flagellum-specific sigma factor that turns on the class 3 genes. Also regulates genes whose products function in a variety of physiological pathways.</text>
</comment>
<comment type="subunit">
    <text evidence="1">Homodimer; disulfide-linked. Forms a heterohexamer composed of two FlhC and four FlhD subunits. Each FlhC binds a FlhD dimer, forming a heterotrimer, and a hexamer assembles by dimerization of two heterotrimers (By similarity).</text>
</comment>
<comment type="subcellular location">
    <subcellularLocation>
        <location evidence="1">Cytoplasm</location>
    </subcellularLocation>
</comment>
<comment type="domain">
    <text evidence="1">The C-terminal region contains a putative helix-turn-helix (HTH) motif, suggesting that this region may bind DNA.</text>
</comment>
<comment type="similarity">
    <text evidence="3">Belongs to the FlhD family.</text>
</comment>
<gene>
    <name type="primary">flhD</name>
</gene>
<evidence type="ECO:0000250" key="1"/>
<evidence type="ECO:0000269" key="2">
    <source>
    </source>
</evidence>
<evidence type="ECO:0000305" key="3"/>
<dbReference type="EMBL" id="U96964">
    <property type="protein sequence ID" value="AAB69767.1"/>
    <property type="molecule type" value="Genomic_DNA"/>
</dbReference>
<dbReference type="RefSeq" id="WP_004243568.1">
    <property type="nucleotide sequence ID" value="NZ_WURR01000001.1"/>
</dbReference>
<dbReference type="SMR" id="O34201"/>
<dbReference type="STRING" id="584.AOUC001_07210"/>
<dbReference type="GeneID" id="6801014"/>
<dbReference type="OMA" id="REDKPMG"/>
<dbReference type="OrthoDB" id="5298036at2"/>
<dbReference type="GO" id="GO:0005737">
    <property type="term" value="C:cytoplasm"/>
    <property type="evidence" value="ECO:0007669"/>
    <property type="project" value="UniProtKB-SubCell"/>
</dbReference>
<dbReference type="GO" id="GO:0003677">
    <property type="term" value="F:DNA binding"/>
    <property type="evidence" value="ECO:0007669"/>
    <property type="project" value="UniProtKB-UniRule"/>
</dbReference>
<dbReference type="GO" id="GO:0044780">
    <property type="term" value="P:bacterial-type flagellum assembly"/>
    <property type="evidence" value="ECO:0007669"/>
    <property type="project" value="InterPro"/>
</dbReference>
<dbReference type="GO" id="GO:0045893">
    <property type="term" value="P:positive regulation of DNA-templated transcription"/>
    <property type="evidence" value="ECO:0007669"/>
    <property type="project" value="InterPro"/>
</dbReference>
<dbReference type="GO" id="GO:1902208">
    <property type="term" value="P:regulation of bacterial-type flagellum assembly"/>
    <property type="evidence" value="ECO:0007669"/>
    <property type="project" value="UniProtKB-UniRule"/>
</dbReference>
<dbReference type="Gene3D" id="1.10.4000.10">
    <property type="entry name" value="Flagellar transcriptional activator FlhD"/>
    <property type="match status" value="1"/>
</dbReference>
<dbReference type="HAMAP" id="MF_00725">
    <property type="entry name" value="FlhD"/>
    <property type="match status" value="1"/>
</dbReference>
<dbReference type="InterPro" id="IPR023559">
    <property type="entry name" value="Flagellar_FlhD"/>
</dbReference>
<dbReference type="InterPro" id="IPR036194">
    <property type="entry name" value="FlhD_sf"/>
</dbReference>
<dbReference type="NCBIfam" id="NF002783">
    <property type="entry name" value="PRK02909.1-1"/>
    <property type="match status" value="1"/>
</dbReference>
<dbReference type="Pfam" id="PF05247">
    <property type="entry name" value="FlhD"/>
    <property type="match status" value="1"/>
</dbReference>
<dbReference type="SUPFAM" id="SSF63592">
    <property type="entry name" value="Flagellar transcriptional activator FlhD"/>
    <property type="match status" value="1"/>
</dbReference>
<sequence length="116" mass="13251">MSTVELLKHIYDINLSYLLLAQRLINQEKASAMFRLGISDSMADALKELTLPQLVKLAETNQLICNFRFEDSETIEQLTKESRVDDLQQIHTGILLSSNLFRQLSEHDTSATKKRA</sequence>
<name>FLHD_PROMI</name>